<comment type="function">
    <text evidence="1">Catalyzes the synthesis of the hydroxymethylpyrimidine phosphate (HMP-P) moiety of thiamine from aminoimidazole ribotide (AIR) in a radical S-adenosyl-L-methionine (SAM)-dependent reaction.</text>
</comment>
<comment type="catalytic activity">
    <reaction evidence="1">
        <text>5-amino-1-(5-phospho-beta-D-ribosyl)imidazole + S-adenosyl-L-methionine = 4-amino-2-methyl-5-(phosphooxymethyl)pyrimidine + CO + 5'-deoxyadenosine + formate + L-methionine + 3 H(+)</text>
        <dbReference type="Rhea" id="RHEA:24840"/>
        <dbReference type="ChEBI" id="CHEBI:15378"/>
        <dbReference type="ChEBI" id="CHEBI:15740"/>
        <dbReference type="ChEBI" id="CHEBI:17245"/>
        <dbReference type="ChEBI" id="CHEBI:17319"/>
        <dbReference type="ChEBI" id="CHEBI:57844"/>
        <dbReference type="ChEBI" id="CHEBI:58354"/>
        <dbReference type="ChEBI" id="CHEBI:59789"/>
        <dbReference type="ChEBI" id="CHEBI:137981"/>
        <dbReference type="EC" id="4.1.99.17"/>
    </reaction>
</comment>
<comment type="cofactor">
    <cofactor evidence="1">
        <name>[4Fe-4S] cluster</name>
        <dbReference type="ChEBI" id="CHEBI:49883"/>
    </cofactor>
    <text evidence="1">Binds 1 [4Fe-4S] cluster per subunit. The cluster is coordinated with 3 cysteines and an exchangeable S-adenosyl-L-methionine.</text>
</comment>
<comment type="pathway">
    <text evidence="1">Cofactor biosynthesis; thiamine diphosphate biosynthesis.</text>
</comment>
<comment type="subunit">
    <text evidence="1">Homodimer.</text>
</comment>
<comment type="similarity">
    <text evidence="1">Belongs to the ThiC family.</text>
</comment>
<name>THIC_XANCP</name>
<organism>
    <name type="scientific">Xanthomonas campestris pv. campestris (strain ATCC 33913 / DSM 3586 / NCPPB 528 / LMG 568 / P 25)</name>
    <dbReference type="NCBI Taxonomy" id="190485"/>
    <lineage>
        <taxon>Bacteria</taxon>
        <taxon>Pseudomonadati</taxon>
        <taxon>Pseudomonadota</taxon>
        <taxon>Gammaproteobacteria</taxon>
        <taxon>Lysobacterales</taxon>
        <taxon>Lysobacteraceae</taxon>
        <taxon>Xanthomonas</taxon>
    </lineage>
</organism>
<sequence length="625" mass="69174">MNAAPTVLLQQTQTLSAAVTQPIPGSRKIFVQGSRADLQVPMREIVLTRTPTLFGGQDNPPLSVYDTSGPYTDPQAAIDLAAGLAPLRADWIAERGDTLPLEALSSSFGRGREHDARLDAVRFPSRRLPRVARSGANVTQMHYARRGIITPEMEFVAIRENQRLEAVTDAVLRKQHPGEAFGAAIQQRITPEFVREEIARGRAILPNNINHPESEPMIIGRNFLTKINANIGNSAVSSGIAEEVEKLVWSIRWGGDTVMDLSTGKHIHETRDWIIRNSPVPIGTVPIYQALEKVDGRAEELTWEIFRDTLIEQAEQGVDYFTIHAGVLLRYVPLTARRVTGIVSRGGSILAKWCLAHHKENFLYTHFEDICEIMKAYDVAFSLGDGLRPGCIADANDAAQFGELETLGELTKLAWKHDVQTMIEGPGHVPMQLIKENMDKQLRECGEAPFYTLGPLTTDIAPGYDHITSAIGAAMIGWFGTAMLCYVTPKEHLGLPNRQDVRDGIMAYKIAAHAADLAKGHPGVQVRDNALSKARFEFRWDDQFHLGLDPEKAKEFHDETLPKDAHKLAHFCSMCGPHFCSMKITQDVRDYAAEHGISEDHALEAGMQEKSGEFVAQGAQVYRAS</sequence>
<proteinExistence type="inferred from homology"/>
<gene>
    <name evidence="1" type="primary">thiC</name>
    <name type="ordered locus">XCC3319</name>
</gene>
<feature type="chain" id="PRO_0000152852" description="Phosphomethylpyrimidine synthase">
    <location>
        <begin position="1"/>
        <end position="625"/>
    </location>
</feature>
<feature type="binding site" evidence="1">
    <location>
        <position position="230"/>
    </location>
    <ligand>
        <name>substrate</name>
    </ligand>
</feature>
<feature type="binding site" evidence="1">
    <location>
        <position position="259"/>
    </location>
    <ligand>
        <name>substrate</name>
    </ligand>
</feature>
<feature type="binding site" evidence="1">
    <location>
        <position position="288"/>
    </location>
    <ligand>
        <name>substrate</name>
    </ligand>
</feature>
<feature type="binding site" evidence="1">
    <location>
        <position position="324"/>
    </location>
    <ligand>
        <name>substrate</name>
    </ligand>
</feature>
<feature type="binding site" evidence="1">
    <location>
        <begin position="344"/>
        <end position="346"/>
    </location>
    <ligand>
        <name>substrate</name>
    </ligand>
</feature>
<feature type="binding site" evidence="1">
    <location>
        <begin position="385"/>
        <end position="388"/>
    </location>
    <ligand>
        <name>substrate</name>
    </ligand>
</feature>
<feature type="binding site" evidence="1">
    <location>
        <position position="424"/>
    </location>
    <ligand>
        <name>substrate</name>
    </ligand>
</feature>
<feature type="binding site" evidence="1">
    <location>
        <position position="428"/>
    </location>
    <ligand>
        <name>Zn(2+)</name>
        <dbReference type="ChEBI" id="CHEBI:29105"/>
    </ligand>
</feature>
<feature type="binding site" evidence="1">
    <location>
        <position position="451"/>
    </location>
    <ligand>
        <name>substrate</name>
    </ligand>
</feature>
<feature type="binding site" evidence="1">
    <location>
        <position position="492"/>
    </location>
    <ligand>
        <name>Zn(2+)</name>
        <dbReference type="ChEBI" id="CHEBI:29105"/>
    </ligand>
</feature>
<feature type="binding site" evidence="1">
    <location>
        <position position="572"/>
    </location>
    <ligand>
        <name>[4Fe-4S] cluster</name>
        <dbReference type="ChEBI" id="CHEBI:49883"/>
        <note>4Fe-4S-S-AdoMet</note>
    </ligand>
</feature>
<feature type="binding site" evidence="1">
    <location>
        <position position="575"/>
    </location>
    <ligand>
        <name>[4Fe-4S] cluster</name>
        <dbReference type="ChEBI" id="CHEBI:49883"/>
        <note>4Fe-4S-S-AdoMet</note>
    </ligand>
</feature>
<feature type="binding site" evidence="1">
    <location>
        <position position="580"/>
    </location>
    <ligand>
        <name>[4Fe-4S] cluster</name>
        <dbReference type="ChEBI" id="CHEBI:49883"/>
        <note>4Fe-4S-S-AdoMet</note>
    </ligand>
</feature>
<reference key="1">
    <citation type="journal article" date="2002" name="Nature">
        <title>Comparison of the genomes of two Xanthomonas pathogens with differing host specificities.</title>
        <authorList>
            <person name="da Silva A.C.R."/>
            <person name="Ferro J.A."/>
            <person name="Reinach F.C."/>
            <person name="Farah C.S."/>
            <person name="Furlan L.R."/>
            <person name="Quaggio R.B."/>
            <person name="Monteiro-Vitorello C.B."/>
            <person name="Van Sluys M.A."/>
            <person name="Almeida N.F. Jr."/>
            <person name="Alves L.M.C."/>
            <person name="do Amaral A.M."/>
            <person name="Bertolini M.C."/>
            <person name="Camargo L.E.A."/>
            <person name="Camarotte G."/>
            <person name="Cannavan F."/>
            <person name="Cardozo J."/>
            <person name="Chambergo F."/>
            <person name="Ciapina L.P."/>
            <person name="Cicarelli R.M.B."/>
            <person name="Coutinho L.L."/>
            <person name="Cursino-Santos J.R."/>
            <person name="El-Dorry H."/>
            <person name="Faria J.B."/>
            <person name="Ferreira A.J.S."/>
            <person name="Ferreira R.C.C."/>
            <person name="Ferro M.I.T."/>
            <person name="Formighieri E.F."/>
            <person name="Franco M.C."/>
            <person name="Greggio C.C."/>
            <person name="Gruber A."/>
            <person name="Katsuyama A.M."/>
            <person name="Kishi L.T."/>
            <person name="Leite R.P."/>
            <person name="Lemos E.G.M."/>
            <person name="Lemos M.V.F."/>
            <person name="Locali E.C."/>
            <person name="Machado M.A."/>
            <person name="Madeira A.M.B.N."/>
            <person name="Martinez-Rossi N.M."/>
            <person name="Martins E.C."/>
            <person name="Meidanis J."/>
            <person name="Menck C.F.M."/>
            <person name="Miyaki C.Y."/>
            <person name="Moon D.H."/>
            <person name="Moreira L.M."/>
            <person name="Novo M.T.M."/>
            <person name="Okura V.K."/>
            <person name="Oliveira M.C."/>
            <person name="Oliveira V.R."/>
            <person name="Pereira H.A."/>
            <person name="Rossi A."/>
            <person name="Sena J.A.D."/>
            <person name="Silva C."/>
            <person name="de Souza R.F."/>
            <person name="Spinola L.A.F."/>
            <person name="Takita M.A."/>
            <person name="Tamura R.E."/>
            <person name="Teixeira E.C."/>
            <person name="Tezza R.I.D."/>
            <person name="Trindade dos Santos M."/>
            <person name="Truffi D."/>
            <person name="Tsai S.M."/>
            <person name="White F.F."/>
            <person name="Setubal J.C."/>
            <person name="Kitajima J.P."/>
        </authorList>
    </citation>
    <scope>NUCLEOTIDE SEQUENCE [LARGE SCALE GENOMIC DNA]</scope>
    <source>
        <strain>ATCC 33913 / DSM 3586 / NCPPB 528 / LMG 568 / P 25</strain>
    </source>
</reference>
<accession>Q8P5L9</accession>
<keyword id="KW-0004">4Fe-4S</keyword>
<keyword id="KW-0408">Iron</keyword>
<keyword id="KW-0411">Iron-sulfur</keyword>
<keyword id="KW-0456">Lyase</keyword>
<keyword id="KW-0479">Metal-binding</keyword>
<keyword id="KW-1185">Reference proteome</keyword>
<keyword id="KW-0949">S-adenosyl-L-methionine</keyword>
<keyword id="KW-0784">Thiamine biosynthesis</keyword>
<keyword id="KW-0862">Zinc</keyword>
<evidence type="ECO:0000255" key="1">
    <source>
        <dbReference type="HAMAP-Rule" id="MF_00089"/>
    </source>
</evidence>
<dbReference type="EC" id="4.1.99.17" evidence="1"/>
<dbReference type="EMBL" id="AE008922">
    <property type="protein sequence ID" value="AAM42589.1"/>
    <property type="molecule type" value="Genomic_DNA"/>
</dbReference>
<dbReference type="RefSeq" id="NP_638665.1">
    <property type="nucleotide sequence ID" value="NC_003902.1"/>
</dbReference>
<dbReference type="RefSeq" id="WP_011038418.1">
    <property type="nucleotide sequence ID" value="NC_003902.1"/>
</dbReference>
<dbReference type="SMR" id="Q8P5L9"/>
<dbReference type="STRING" id="190485.XCC3319"/>
<dbReference type="EnsemblBacteria" id="AAM42589">
    <property type="protein sequence ID" value="AAM42589"/>
    <property type="gene ID" value="XCC3319"/>
</dbReference>
<dbReference type="KEGG" id="xcc:XCC3319"/>
<dbReference type="PATRIC" id="fig|190485.4.peg.3548"/>
<dbReference type="eggNOG" id="COG0422">
    <property type="taxonomic scope" value="Bacteria"/>
</dbReference>
<dbReference type="HOGENOM" id="CLU_013181_2_1_6"/>
<dbReference type="OrthoDB" id="9805897at2"/>
<dbReference type="UniPathway" id="UPA00060"/>
<dbReference type="Proteomes" id="UP000001010">
    <property type="component" value="Chromosome"/>
</dbReference>
<dbReference type="GO" id="GO:0005829">
    <property type="term" value="C:cytosol"/>
    <property type="evidence" value="ECO:0000318"/>
    <property type="project" value="GO_Central"/>
</dbReference>
<dbReference type="GO" id="GO:0051539">
    <property type="term" value="F:4 iron, 4 sulfur cluster binding"/>
    <property type="evidence" value="ECO:0007669"/>
    <property type="project" value="UniProtKB-KW"/>
</dbReference>
<dbReference type="GO" id="GO:0016830">
    <property type="term" value="F:carbon-carbon lyase activity"/>
    <property type="evidence" value="ECO:0007669"/>
    <property type="project" value="InterPro"/>
</dbReference>
<dbReference type="GO" id="GO:0008270">
    <property type="term" value="F:zinc ion binding"/>
    <property type="evidence" value="ECO:0007669"/>
    <property type="project" value="UniProtKB-UniRule"/>
</dbReference>
<dbReference type="GO" id="GO:0009228">
    <property type="term" value="P:thiamine biosynthetic process"/>
    <property type="evidence" value="ECO:0000318"/>
    <property type="project" value="GO_Central"/>
</dbReference>
<dbReference type="GO" id="GO:0009229">
    <property type="term" value="P:thiamine diphosphate biosynthetic process"/>
    <property type="evidence" value="ECO:0007669"/>
    <property type="project" value="UniProtKB-UniRule"/>
</dbReference>
<dbReference type="FunFam" id="3.20.20.540:FF:000001">
    <property type="entry name" value="Phosphomethylpyrimidine synthase"/>
    <property type="match status" value="1"/>
</dbReference>
<dbReference type="Gene3D" id="6.10.250.620">
    <property type="match status" value="1"/>
</dbReference>
<dbReference type="Gene3D" id="3.20.20.540">
    <property type="entry name" value="Radical SAM ThiC family, central domain"/>
    <property type="match status" value="1"/>
</dbReference>
<dbReference type="HAMAP" id="MF_00089">
    <property type="entry name" value="ThiC"/>
    <property type="match status" value="1"/>
</dbReference>
<dbReference type="InterPro" id="IPR037509">
    <property type="entry name" value="ThiC"/>
</dbReference>
<dbReference type="InterPro" id="IPR025747">
    <property type="entry name" value="ThiC-associated_dom"/>
</dbReference>
<dbReference type="InterPro" id="IPR038521">
    <property type="entry name" value="ThiC/Bza_core_dom"/>
</dbReference>
<dbReference type="InterPro" id="IPR002817">
    <property type="entry name" value="ThiC/BzaA/B"/>
</dbReference>
<dbReference type="NCBIfam" id="NF006763">
    <property type="entry name" value="PRK09284.1"/>
    <property type="match status" value="1"/>
</dbReference>
<dbReference type="NCBIfam" id="NF009895">
    <property type="entry name" value="PRK13352.1"/>
    <property type="match status" value="1"/>
</dbReference>
<dbReference type="NCBIfam" id="TIGR00190">
    <property type="entry name" value="thiC"/>
    <property type="match status" value="1"/>
</dbReference>
<dbReference type="PANTHER" id="PTHR30557:SF1">
    <property type="entry name" value="PHOSPHOMETHYLPYRIMIDINE SYNTHASE, CHLOROPLASTIC"/>
    <property type="match status" value="1"/>
</dbReference>
<dbReference type="PANTHER" id="PTHR30557">
    <property type="entry name" value="THIAMINE BIOSYNTHESIS PROTEIN THIC"/>
    <property type="match status" value="1"/>
</dbReference>
<dbReference type="Pfam" id="PF13667">
    <property type="entry name" value="ThiC-associated"/>
    <property type="match status" value="1"/>
</dbReference>
<dbReference type="Pfam" id="PF01964">
    <property type="entry name" value="ThiC_Rad_SAM"/>
    <property type="match status" value="1"/>
</dbReference>
<dbReference type="SFLD" id="SFLDF00407">
    <property type="entry name" value="phosphomethylpyrimidine_syntha"/>
    <property type="match status" value="1"/>
</dbReference>
<dbReference type="SFLD" id="SFLDG01114">
    <property type="entry name" value="phosphomethylpyrimidine_syntha"/>
    <property type="match status" value="1"/>
</dbReference>
<dbReference type="SFLD" id="SFLDS00113">
    <property type="entry name" value="Radical_SAM_Phosphomethylpyrim"/>
    <property type="match status" value="1"/>
</dbReference>
<protein>
    <recommendedName>
        <fullName evidence="1">Phosphomethylpyrimidine synthase</fullName>
        <ecNumber evidence="1">4.1.99.17</ecNumber>
    </recommendedName>
    <alternativeName>
        <fullName evidence="1">Hydroxymethylpyrimidine phosphate synthase</fullName>
        <shortName evidence="1">HMP-P synthase</shortName>
        <shortName evidence="1">HMP-phosphate synthase</shortName>
        <shortName evidence="1">HMPP synthase</shortName>
    </alternativeName>
    <alternativeName>
        <fullName evidence="1">Thiamine biosynthesis protein ThiC</fullName>
    </alternativeName>
</protein>